<evidence type="ECO:0000255" key="1">
    <source>
        <dbReference type="HAMAP-Rule" id="MF_01325"/>
    </source>
</evidence>
<evidence type="ECO:0000305" key="2"/>
<reference key="1">
    <citation type="journal article" date="2015" name="Genome Announc.">
        <title>Complete Genome Sequence of Methanosphaerula palustris E1-9CT, a Hydrogenotrophic Methanogen Isolated from a Minerotrophic Fen Peatland.</title>
        <authorList>
            <person name="Cadillo-Quiroz H."/>
            <person name="Browne P."/>
            <person name="Kyrpides N."/>
            <person name="Woyke T."/>
            <person name="Goodwin L."/>
            <person name="Detter C."/>
            <person name="Yavitt J.B."/>
            <person name="Zinder S.H."/>
        </authorList>
    </citation>
    <scope>NUCLEOTIDE SEQUENCE [LARGE SCALE GENOMIC DNA]</scope>
    <source>
        <strain>ATCC BAA-1556 / DSM 19958 / E1-9c</strain>
    </source>
</reference>
<proteinExistence type="inferred from homology"/>
<accession>B8GKD3</accession>
<keyword id="KW-1185">Reference proteome</keyword>
<keyword id="KW-0687">Ribonucleoprotein</keyword>
<keyword id="KW-0689">Ribosomal protein</keyword>
<keyword id="KW-0694">RNA-binding</keyword>
<keyword id="KW-0699">rRNA-binding</keyword>
<name>RL3_METPE</name>
<gene>
    <name evidence="1" type="primary">rpl3</name>
    <name type="ordered locus">Mpal_0442</name>
</gene>
<comment type="function">
    <text evidence="1">One of the primary rRNA binding proteins, it binds directly near the 3'-end of the 23S rRNA, where it nucleates assembly of the 50S subunit.</text>
</comment>
<comment type="subunit">
    <text evidence="1">Part of the 50S ribosomal subunit. Forms a cluster with proteins L14 and L24e.</text>
</comment>
<comment type="similarity">
    <text evidence="1">Belongs to the universal ribosomal protein uL3 family.</text>
</comment>
<sequence>MANIHRPRRGSLAYSPRKRAKSQVPKYHSWPARDGEPILQSFAGYKVGMTHVIMVDDHKNSPTEGKDIMVPVTIIEIPPMKVAAIRAYTADTYGKRALTEVWTEQLSTLLGRRITLPKKYSEEAGFKALSEAVAAGTVTELHALMYTQPDTLTGVPKKVPELMEVCIGGGTLEQKVEFAQSIIGNEVNLADVIGAGEYADVTAITTGKGTQGPVKRWGIMLRKRKHSRGGKKRHIGNLGPWNPHHVRWQVPQMGQMGYQQRTDFNKRILKIGENGTDITPAGGFLHYGLLRNPYVMIKGSVPGPVKRLIRIRPAVRKGEHHARVPAIEFVSTQSKQG</sequence>
<protein>
    <recommendedName>
        <fullName evidence="1">Large ribosomal subunit protein uL3</fullName>
    </recommendedName>
    <alternativeName>
        <fullName evidence="2">50S ribosomal protein L3</fullName>
    </alternativeName>
</protein>
<feature type="chain" id="PRO_1000165895" description="Large ribosomal subunit protein uL3">
    <location>
        <begin position="1"/>
        <end position="337"/>
    </location>
</feature>
<organism>
    <name type="scientific">Methanosphaerula palustris (strain ATCC BAA-1556 / DSM 19958 / E1-9c)</name>
    <dbReference type="NCBI Taxonomy" id="521011"/>
    <lineage>
        <taxon>Archaea</taxon>
        <taxon>Methanobacteriati</taxon>
        <taxon>Methanobacteriota</taxon>
        <taxon>Stenosarchaea group</taxon>
        <taxon>Methanomicrobia</taxon>
        <taxon>Methanomicrobiales</taxon>
        <taxon>Methanoregulaceae</taxon>
        <taxon>Methanosphaerula</taxon>
    </lineage>
</organism>
<dbReference type="EMBL" id="CP001338">
    <property type="protein sequence ID" value="ACL15816.1"/>
    <property type="molecule type" value="Genomic_DNA"/>
</dbReference>
<dbReference type="RefSeq" id="WP_012617135.1">
    <property type="nucleotide sequence ID" value="NC_011832.1"/>
</dbReference>
<dbReference type="SMR" id="B8GKD3"/>
<dbReference type="STRING" id="521011.Mpal_0442"/>
<dbReference type="GeneID" id="7272766"/>
<dbReference type="KEGG" id="mpl:Mpal_0442"/>
<dbReference type="eggNOG" id="arCOG04070">
    <property type="taxonomic scope" value="Archaea"/>
</dbReference>
<dbReference type="HOGENOM" id="CLU_033361_2_0_2"/>
<dbReference type="OrthoDB" id="6121at2157"/>
<dbReference type="Proteomes" id="UP000002457">
    <property type="component" value="Chromosome"/>
</dbReference>
<dbReference type="GO" id="GO:0022625">
    <property type="term" value="C:cytosolic large ribosomal subunit"/>
    <property type="evidence" value="ECO:0007669"/>
    <property type="project" value="TreeGrafter"/>
</dbReference>
<dbReference type="GO" id="GO:0019843">
    <property type="term" value="F:rRNA binding"/>
    <property type="evidence" value="ECO:0007669"/>
    <property type="project" value="UniProtKB-UniRule"/>
</dbReference>
<dbReference type="GO" id="GO:0003735">
    <property type="term" value="F:structural constituent of ribosome"/>
    <property type="evidence" value="ECO:0007669"/>
    <property type="project" value="InterPro"/>
</dbReference>
<dbReference type="GO" id="GO:0006412">
    <property type="term" value="P:translation"/>
    <property type="evidence" value="ECO:0007669"/>
    <property type="project" value="UniProtKB-UniRule"/>
</dbReference>
<dbReference type="Gene3D" id="3.30.1430.10">
    <property type="match status" value="1"/>
</dbReference>
<dbReference type="Gene3D" id="4.10.960.10">
    <property type="entry name" value="Ribosomal protein L3, domain 3"/>
    <property type="match status" value="1"/>
</dbReference>
<dbReference type="Gene3D" id="2.40.30.10">
    <property type="entry name" value="Translation factors"/>
    <property type="match status" value="1"/>
</dbReference>
<dbReference type="HAMAP" id="MF_01325_A">
    <property type="entry name" value="Ribosomal_uL3_A"/>
    <property type="match status" value="1"/>
</dbReference>
<dbReference type="InterPro" id="IPR045077">
    <property type="entry name" value="L3_arc_euk"/>
</dbReference>
<dbReference type="InterPro" id="IPR044892">
    <property type="entry name" value="Ribosomal_L3_dom_3_arc_sf"/>
</dbReference>
<dbReference type="InterPro" id="IPR000597">
    <property type="entry name" value="Ribosomal_uL3"/>
</dbReference>
<dbReference type="InterPro" id="IPR019928">
    <property type="entry name" value="Ribosomal_uL3_arc"/>
</dbReference>
<dbReference type="InterPro" id="IPR009000">
    <property type="entry name" value="Transl_B-barrel_sf"/>
</dbReference>
<dbReference type="NCBIfam" id="TIGR03626">
    <property type="entry name" value="L3_arch"/>
    <property type="match status" value="1"/>
</dbReference>
<dbReference type="NCBIfam" id="NF003261">
    <property type="entry name" value="PRK04231.1"/>
    <property type="match status" value="1"/>
</dbReference>
<dbReference type="PANTHER" id="PTHR11363">
    <property type="entry name" value="60S RIBOSOMAL PROTEIN L3-RELATED"/>
    <property type="match status" value="1"/>
</dbReference>
<dbReference type="PANTHER" id="PTHR11363:SF5">
    <property type="entry name" value="LARGE RIBOSOMAL SUBUNIT PROTEIN UL3"/>
    <property type="match status" value="1"/>
</dbReference>
<dbReference type="Pfam" id="PF00297">
    <property type="entry name" value="Ribosomal_L3"/>
    <property type="match status" value="1"/>
</dbReference>
<dbReference type="SUPFAM" id="SSF50447">
    <property type="entry name" value="Translation proteins"/>
    <property type="match status" value="1"/>
</dbReference>